<accession>Q4JX97</accession>
<sequence length="271" mass="29245">MADEVVGQEYQGNPGAFSPQQARQIFRAGTVAHTSGYSRGYAQANLITLPQEQAFDFLLFAQRNPKPCPLLGVLEAGQVSSELLADGDIRSDIPLYRVYRKGQLDSEVPDVRDVWREDLVSFIIGCSFTFETALLDNGVPVEHIAQGKNVPMYRTSIPTNSAGAFSGPMVVSMRPIPAAQVADAVRITSRYPAVHGAPVHVGDPAAIGIQDLNNPDFGEAVDIPAGTIPVFWACGVTPQSVVMESKPEFAICHAPGHMLITDARDLQYQVP</sequence>
<proteinExistence type="inferred from homology"/>
<reference key="1">
    <citation type="journal article" date="2005" name="J. Bacteriol.">
        <title>Complete genome sequence and analysis of the multiresistant nosocomial pathogen Corynebacterium jeikeium K411, a lipid-requiring bacterium of the human skin flora.</title>
        <authorList>
            <person name="Tauch A."/>
            <person name="Kaiser O."/>
            <person name="Hain T."/>
            <person name="Goesmann A."/>
            <person name="Weisshaar B."/>
            <person name="Albersmeier A."/>
            <person name="Bekel T."/>
            <person name="Bischoff N."/>
            <person name="Brune I."/>
            <person name="Chakraborty T."/>
            <person name="Kalinowski J."/>
            <person name="Meyer F."/>
            <person name="Rupp O."/>
            <person name="Schneiker S."/>
            <person name="Viehoever P."/>
            <person name="Puehler A."/>
        </authorList>
    </citation>
    <scope>NUCLEOTIDE SEQUENCE [LARGE SCALE GENOMIC DNA]</scope>
    <source>
        <strain>K411</strain>
    </source>
</reference>
<evidence type="ECO:0000255" key="1">
    <source>
        <dbReference type="HAMAP-Rule" id="MF_01830"/>
    </source>
</evidence>
<dbReference type="EC" id="4.2.1.-" evidence="1"/>
<dbReference type="EMBL" id="CR931997">
    <property type="protein sequence ID" value="CAI36560.1"/>
    <property type="molecule type" value="Genomic_DNA"/>
</dbReference>
<dbReference type="RefSeq" id="WP_005294477.1">
    <property type="nucleotide sequence ID" value="NC_007164.1"/>
</dbReference>
<dbReference type="SMR" id="Q4JX97"/>
<dbReference type="STRING" id="306537.jk0403"/>
<dbReference type="GeneID" id="92737894"/>
<dbReference type="KEGG" id="cjk:jk0403"/>
<dbReference type="eggNOG" id="COG4336">
    <property type="taxonomic scope" value="Bacteria"/>
</dbReference>
<dbReference type="HOGENOM" id="CLU_059759_0_0_11"/>
<dbReference type="OrthoDB" id="149585at2"/>
<dbReference type="Proteomes" id="UP000000545">
    <property type="component" value="Chromosome"/>
</dbReference>
<dbReference type="GO" id="GO:0016829">
    <property type="term" value="F:lyase activity"/>
    <property type="evidence" value="ECO:0007669"/>
    <property type="project" value="UniProtKB-KW"/>
</dbReference>
<dbReference type="FunFam" id="3.30.2040.10:FF:000001">
    <property type="entry name" value="D-glutamate cyclase, mitochondrial"/>
    <property type="match status" value="1"/>
</dbReference>
<dbReference type="Gene3D" id="3.40.1640.10">
    <property type="entry name" value="PSTPO5379-like"/>
    <property type="match status" value="1"/>
</dbReference>
<dbReference type="Gene3D" id="3.30.2040.10">
    <property type="entry name" value="PSTPO5379-like domain"/>
    <property type="match status" value="1"/>
</dbReference>
<dbReference type="HAMAP" id="MF_01830">
    <property type="entry name" value="Hydro_lyase"/>
    <property type="match status" value="1"/>
</dbReference>
<dbReference type="InterPro" id="IPR009906">
    <property type="entry name" value="D-Glu_cyclase"/>
</dbReference>
<dbReference type="InterPro" id="IPR038021">
    <property type="entry name" value="Putative_hydro-lyase"/>
</dbReference>
<dbReference type="InterPro" id="IPR016938">
    <property type="entry name" value="UPF0317"/>
</dbReference>
<dbReference type="NCBIfam" id="NF003969">
    <property type="entry name" value="PRK05463.1"/>
    <property type="match status" value="1"/>
</dbReference>
<dbReference type="PANTHER" id="PTHR32022">
    <property type="entry name" value="D-GLUTAMATE CYCLASE, MITOCHONDRIAL"/>
    <property type="match status" value="1"/>
</dbReference>
<dbReference type="PANTHER" id="PTHR32022:SF10">
    <property type="entry name" value="D-GLUTAMATE CYCLASE, MITOCHONDRIAL"/>
    <property type="match status" value="1"/>
</dbReference>
<dbReference type="Pfam" id="PF07286">
    <property type="entry name" value="D-Glu_cyclase"/>
    <property type="match status" value="1"/>
</dbReference>
<dbReference type="PIRSF" id="PIRSF029755">
    <property type="entry name" value="UCP029755"/>
    <property type="match status" value="1"/>
</dbReference>
<dbReference type="SUPFAM" id="SSF160920">
    <property type="entry name" value="PSTPO5379-like"/>
    <property type="match status" value="1"/>
</dbReference>
<keyword id="KW-0456">Lyase</keyword>
<keyword id="KW-1185">Reference proteome</keyword>
<organism>
    <name type="scientific">Corynebacterium jeikeium (strain K411)</name>
    <dbReference type="NCBI Taxonomy" id="306537"/>
    <lineage>
        <taxon>Bacteria</taxon>
        <taxon>Bacillati</taxon>
        <taxon>Actinomycetota</taxon>
        <taxon>Actinomycetes</taxon>
        <taxon>Mycobacteriales</taxon>
        <taxon>Corynebacteriaceae</taxon>
        <taxon>Corynebacterium</taxon>
    </lineage>
</organism>
<protein>
    <recommendedName>
        <fullName evidence="1">Putative hydro-lyase jk0403</fullName>
        <ecNumber evidence="1">4.2.1.-</ecNumber>
    </recommendedName>
</protein>
<comment type="similarity">
    <text evidence="1">Belongs to the D-glutamate cyclase family.</text>
</comment>
<feature type="chain" id="PRO_0000379833" description="Putative hydro-lyase jk0403">
    <location>
        <begin position="1"/>
        <end position="271"/>
    </location>
</feature>
<gene>
    <name type="ordered locus">jk0403</name>
</gene>
<name>Y403_CORJK</name>